<accession>Q9D0I9</accession>
<accession>Q3THP2</accession>
<accession>Q3TM73</accession>
<accession>Q3U8R2</accession>
<accession>Q3U930</accession>
<accession>Q5SXA8</accession>
<accession>Q8VDW1</accession>
<gene>
    <name type="primary">Rars1</name>
    <name type="synonym">Rars</name>
</gene>
<reference key="1">
    <citation type="journal article" date="2005" name="Science">
        <title>The transcriptional landscape of the mammalian genome.</title>
        <authorList>
            <person name="Carninci P."/>
            <person name="Kasukawa T."/>
            <person name="Katayama S."/>
            <person name="Gough J."/>
            <person name="Frith M.C."/>
            <person name="Maeda N."/>
            <person name="Oyama R."/>
            <person name="Ravasi T."/>
            <person name="Lenhard B."/>
            <person name="Wells C."/>
            <person name="Kodzius R."/>
            <person name="Shimokawa K."/>
            <person name="Bajic V.B."/>
            <person name="Brenner S.E."/>
            <person name="Batalov S."/>
            <person name="Forrest A.R."/>
            <person name="Zavolan M."/>
            <person name="Davis M.J."/>
            <person name="Wilming L.G."/>
            <person name="Aidinis V."/>
            <person name="Allen J.E."/>
            <person name="Ambesi-Impiombato A."/>
            <person name="Apweiler R."/>
            <person name="Aturaliya R.N."/>
            <person name="Bailey T.L."/>
            <person name="Bansal M."/>
            <person name="Baxter L."/>
            <person name="Beisel K.W."/>
            <person name="Bersano T."/>
            <person name="Bono H."/>
            <person name="Chalk A.M."/>
            <person name="Chiu K.P."/>
            <person name="Choudhary V."/>
            <person name="Christoffels A."/>
            <person name="Clutterbuck D.R."/>
            <person name="Crowe M.L."/>
            <person name="Dalla E."/>
            <person name="Dalrymple B.P."/>
            <person name="de Bono B."/>
            <person name="Della Gatta G."/>
            <person name="di Bernardo D."/>
            <person name="Down T."/>
            <person name="Engstrom P."/>
            <person name="Fagiolini M."/>
            <person name="Faulkner G."/>
            <person name="Fletcher C.F."/>
            <person name="Fukushima T."/>
            <person name="Furuno M."/>
            <person name="Futaki S."/>
            <person name="Gariboldi M."/>
            <person name="Georgii-Hemming P."/>
            <person name="Gingeras T.R."/>
            <person name="Gojobori T."/>
            <person name="Green R.E."/>
            <person name="Gustincich S."/>
            <person name="Harbers M."/>
            <person name="Hayashi Y."/>
            <person name="Hensch T.K."/>
            <person name="Hirokawa N."/>
            <person name="Hill D."/>
            <person name="Huminiecki L."/>
            <person name="Iacono M."/>
            <person name="Ikeo K."/>
            <person name="Iwama A."/>
            <person name="Ishikawa T."/>
            <person name="Jakt M."/>
            <person name="Kanapin A."/>
            <person name="Katoh M."/>
            <person name="Kawasawa Y."/>
            <person name="Kelso J."/>
            <person name="Kitamura H."/>
            <person name="Kitano H."/>
            <person name="Kollias G."/>
            <person name="Krishnan S.P."/>
            <person name="Kruger A."/>
            <person name="Kummerfeld S.K."/>
            <person name="Kurochkin I.V."/>
            <person name="Lareau L.F."/>
            <person name="Lazarevic D."/>
            <person name="Lipovich L."/>
            <person name="Liu J."/>
            <person name="Liuni S."/>
            <person name="McWilliam S."/>
            <person name="Madan Babu M."/>
            <person name="Madera M."/>
            <person name="Marchionni L."/>
            <person name="Matsuda H."/>
            <person name="Matsuzawa S."/>
            <person name="Miki H."/>
            <person name="Mignone F."/>
            <person name="Miyake S."/>
            <person name="Morris K."/>
            <person name="Mottagui-Tabar S."/>
            <person name="Mulder N."/>
            <person name="Nakano N."/>
            <person name="Nakauchi H."/>
            <person name="Ng P."/>
            <person name="Nilsson R."/>
            <person name="Nishiguchi S."/>
            <person name="Nishikawa S."/>
            <person name="Nori F."/>
            <person name="Ohara O."/>
            <person name="Okazaki Y."/>
            <person name="Orlando V."/>
            <person name="Pang K.C."/>
            <person name="Pavan W.J."/>
            <person name="Pavesi G."/>
            <person name="Pesole G."/>
            <person name="Petrovsky N."/>
            <person name="Piazza S."/>
            <person name="Reed J."/>
            <person name="Reid J.F."/>
            <person name="Ring B.Z."/>
            <person name="Ringwald M."/>
            <person name="Rost B."/>
            <person name="Ruan Y."/>
            <person name="Salzberg S.L."/>
            <person name="Sandelin A."/>
            <person name="Schneider C."/>
            <person name="Schoenbach C."/>
            <person name="Sekiguchi K."/>
            <person name="Semple C.A."/>
            <person name="Seno S."/>
            <person name="Sessa L."/>
            <person name="Sheng Y."/>
            <person name="Shibata Y."/>
            <person name="Shimada H."/>
            <person name="Shimada K."/>
            <person name="Silva D."/>
            <person name="Sinclair B."/>
            <person name="Sperling S."/>
            <person name="Stupka E."/>
            <person name="Sugiura K."/>
            <person name="Sultana R."/>
            <person name="Takenaka Y."/>
            <person name="Taki K."/>
            <person name="Tammoja K."/>
            <person name="Tan S.L."/>
            <person name="Tang S."/>
            <person name="Taylor M.S."/>
            <person name="Tegner J."/>
            <person name="Teichmann S.A."/>
            <person name="Ueda H.R."/>
            <person name="van Nimwegen E."/>
            <person name="Verardo R."/>
            <person name="Wei C.L."/>
            <person name="Yagi K."/>
            <person name="Yamanishi H."/>
            <person name="Zabarovsky E."/>
            <person name="Zhu S."/>
            <person name="Zimmer A."/>
            <person name="Hide W."/>
            <person name="Bult C."/>
            <person name="Grimmond S.M."/>
            <person name="Teasdale R.D."/>
            <person name="Liu E.T."/>
            <person name="Brusic V."/>
            <person name="Quackenbush J."/>
            <person name="Wahlestedt C."/>
            <person name="Mattick J.S."/>
            <person name="Hume D.A."/>
            <person name="Kai C."/>
            <person name="Sasaki D."/>
            <person name="Tomaru Y."/>
            <person name="Fukuda S."/>
            <person name="Kanamori-Katayama M."/>
            <person name="Suzuki M."/>
            <person name="Aoki J."/>
            <person name="Arakawa T."/>
            <person name="Iida J."/>
            <person name="Imamura K."/>
            <person name="Itoh M."/>
            <person name="Kato T."/>
            <person name="Kawaji H."/>
            <person name="Kawagashira N."/>
            <person name="Kawashima T."/>
            <person name="Kojima M."/>
            <person name="Kondo S."/>
            <person name="Konno H."/>
            <person name="Nakano K."/>
            <person name="Ninomiya N."/>
            <person name="Nishio T."/>
            <person name="Okada M."/>
            <person name="Plessy C."/>
            <person name="Shibata K."/>
            <person name="Shiraki T."/>
            <person name="Suzuki S."/>
            <person name="Tagami M."/>
            <person name="Waki K."/>
            <person name="Watahiki A."/>
            <person name="Okamura-Oho Y."/>
            <person name="Suzuki H."/>
            <person name="Kawai J."/>
            <person name="Hayashizaki Y."/>
        </authorList>
    </citation>
    <scope>NUCLEOTIDE SEQUENCE [LARGE SCALE MRNA]</scope>
    <source>
        <strain>C57BL/6J</strain>
        <tissue>Bone marrow macrophage</tissue>
        <tissue>Embryo</tissue>
        <tissue>Embryonic head</tissue>
        <tissue>Lung</tissue>
    </source>
</reference>
<reference key="2">
    <citation type="journal article" date="2009" name="PLoS Biol.">
        <title>Lineage-specific biology revealed by a finished genome assembly of the mouse.</title>
        <authorList>
            <person name="Church D.M."/>
            <person name="Goodstadt L."/>
            <person name="Hillier L.W."/>
            <person name="Zody M.C."/>
            <person name="Goldstein S."/>
            <person name="She X."/>
            <person name="Bult C.J."/>
            <person name="Agarwala R."/>
            <person name="Cherry J.L."/>
            <person name="DiCuccio M."/>
            <person name="Hlavina W."/>
            <person name="Kapustin Y."/>
            <person name="Meric P."/>
            <person name="Maglott D."/>
            <person name="Birtle Z."/>
            <person name="Marques A.C."/>
            <person name="Graves T."/>
            <person name="Zhou S."/>
            <person name="Teague B."/>
            <person name="Potamousis K."/>
            <person name="Churas C."/>
            <person name="Place M."/>
            <person name="Herschleb J."/>
            <person name="Runnheim R."/>
            <person name="Forrest D."/>
            <person name="Amos-Landgraf J."/>
            <person name="Schwartz D.C."/>
            <person name="Cheng Z."/>
            <person name="Lindblad-Toh K."/>
            <person name="Eichler E.E."/>
            <person name="Ponting C.P."/>
        </authorList>
    </citation>
    <scope>NUCLEOTIDE SEQUENCE [LARGE SCALE GENOMIC DNA]</scope>
    <source>
        <strain>C57BL/6J</strain>
    </source>
</reference>
<reference key="3">
    <citation type="submission" date="2009-01" db="EMBL/GenBank/DDBJ databases">
        <authorList>
            <person name="Mural R.J."/>
            <person name="Adams M.D."/>
            <person name="Myers E.W."/>
            <person name="Smith H.O."/>
            <person name="Venter J.C."/>
        </authorList>
    </citation>
    <scope>NUCLEOTIDE SEQUENCE [LARGE SCALE GENOMIC DNA]</scope>
</reference>
<reference key="4">
    <citation type="journal article" date="2004" name="Genome Res.">
        <title>The status, quality, and expansion of the NIH full-length cDNA project: the Mammalian Gene Collection (MGC).</title>
        <authorList>
            <consortium name="The MGC Project Team"/>
        </authorList>
    </citation>
    <scope>NUCLEOTIDE SEQUENCE [LARGE SCALE MRNA]</scope>
    <source>
        <strain>Czech 2</strain>
        <tissue>Mammary tumor</tissue>
    </source>
</reference>
<reference key="5">
    <citation type="journal article" date="2002" name="Proc. Natl. Acad. Sci. U.S.A.">
        <title>p38 is essential for the assembly and stability of macromolecular tRNA synthetase complex: implications for its physiological significance.</title>
        <authorList>
            <person name="Kim J.Y."/>
            <person name="Kang Y.-S."/>
            <person name="Lee J.-W."/>
            <person name="Kim H.J."/>
            <person name="Ahn Y.H."/>
            <person name="Park H."/>
            <person name="Ko Y.-G."/>
            <person name="Kim S."/>
        </authorList>
    </citation>
    <scope>SUBUNIT</scope>
    <scope>CATALYTIC ACTIVITY</scope>
    <scope>FUNCTION</scope>
</reference>
<reference key="6">
    <citation type="journal article" date="2010" name="Cell">
        <title>A tissue-specific atlas of mouse protein phosphorylation and expression.</title>
        <authorList>
            <person name="Huttlin E.L."/>
            <person name="Jedrychowski M.P."/>
            <person name="Elias J.E."/>
            <person name="Goswami T."/>
            <person name="Rad R."/>
            <person name="Beausoleil S.A."/>
            <person name="Villen J."/>
            <person name="Haas W."/>
            <person name="Sowa M.E."/>
            <person name="Gygi S.P."/>
        </authorList>
    </citation>
    <scope>IDENTIFICATION BY MASS SPECTROMETRY [LARGE SCALE ANALYSIS]</scope>
    <source>
        <tissue>Brain</tissue>
        <tissue>Brown adipose tissue</tissue>
        <tissue>Heart</tissue>
        <tissue>Kidney</tissue>
        <tissue>Liver</tissue>
        <tissue>Lung</tissue>
        <tissue>Pancreas</tissue>
        <tissue>Spleen</tissue>
        <tissue>Testis</tissue>
    </source>
</reference>
<dbReference type="EC" id="6.1.1.19" evidence="3"/>
<dbReference type="EMBL" id="AK011383">
    <property type="protein sequence ID" value="BAB27583.1"/>
    <property type="molecule type" value="mRNA"/>
</dbReference>
<dbReference type="EMBL" id="AK076160">
    <property type="protein sequence ID" value="BAC36226.1"/>
    <property type="molecule type" value="mRNA"/>
</dbReference>
<dbReference type="EMBL" id="AK149856">
    <property type="protein sequence ID" value="BAE29127.1"/>
    <property type="molecule type" value="mRNA"/>
</dbReference>
<dbReference type="EMBL" id="AK151966">
    <property type="protein sequence ID" value="BAE30837.1"/>
    <property type="molecule type" value="mRNA"/>
</dbReference>
<dbReference type="EMBL" id="AK152108">
    <property type="protein sequence ID" value="BAE30955.1"/>
    <property type="molecule type" value="mRNA"/>
</dbReference>
<dbReference type="EMBL" id="AK166097">
    <property type="protein sequence ID" value="BAE38569.1"/>
    <property type="molecule type" value="mRNA"/>
</dbReference>
<dbReference type="EMBL" id="AK168194">
    <property type="protein sequence ID" value="BAE40154.1"/>
    <property type="molecule type" value="mRNA"/>
</dbReference>
<dbReference type="EMBL" id="AL596084">
    <property type="status" value="NOT_ANNOTATED_CDS"/>
    <property type="molecule type" value="Genomic_DNA"/>
</dbReference>
<dbReference type="EMBL" id="CH466658">
    <property type="protein sequence ID" value="EDL16275.1"/>
    <property type="molecule type" value="Genomic_DNA"/>
</dbReference>
<dbReference type="EMBL" id="BC020132">
    <property type="protein sequence ID" value="AAH20132.1"/>
    <property type="molecule type" value="mRNA"/>
</dbReference>
<dbReference type="CCDS" id="CCDS24544.1"/>
<dbReference type="RefSeq" id="NP_080212.2">
    <property type="nucleotide sequence ID" value="NM_025936.3"/>
</dbReference>
<dbReference type="SMR" id="Q9D0I9"/>
<dbReference type="BioGRID" id="222643">
    <property type="interactions" value="25"/>
</dbReference>
<dbReference type="FunCoup" id="Q9D0I9">
    <property type="interactions" value="3414"/>
</dbReference>
<dbReference type="IntAct" id="Q9D0I9">
    <property type="interactions" value="4"/>
</dbReference>
<dbReference type="STRING" id="10090.ENSMUSP00000018992"/>
<dbReference type="GlyGen" id="Q9D0I9">
    <property type="glycosylation" value="1 site, 1 O-linked glycan (1 site)"/>
</dbReference>
<dbReference type="iPTMnet" id="Q9D0I9"/>
<dbReference type="MetOSite" id="Q9D0I9"/>
<dbReference type="PhosphoSitePlus" id="Q9D0I9"/>
<dbReference type="SwissPalm" id="Q9D0I9"/>
<dbReference type="jPOST" id="Q9D0I9"/>
<dbReference type="PaxDb" id="10090-ENSMUSP00000018992"/>
<dbReference type="PeptideAtlas" id="Q9D0I9"/>
<dbReference type="ProteomicsDB" id="253442"/>
<dbReference type="Pumba" id="Q9D0I9"/>
<dbReference type="Antibodypedia" id="1285">
    <property type="antibodies" value="246 antibodies from 32 providers"/>
</dbReference>
<dbReference type="DNASU" id="104458"/>
<dbReference type="Ensembl" id="ENSMUST00000018992.4">
    <property type="protein sequence ID" value="ENSMUSP00000018992.4"/>
    <property type="gene ID" value="ENSMUSG00000018848.5"/>
</dbReference>
<dbReference type="GeneID" id="104458"/>
<dbReference type="KEGG" id="mmu:104458"/>
<dbReference type="UCSC" id="uc007ilh.2">
    <property type="organism name" value="mouse"/>
</dbReference>
<dbReference type="AGR" id="MGI:1914297"/>
<dbReference type="CTD" id="5917"/>
<dbReference type="MGI" id="MGI:1914297">
    <property type="gene designation" value="Rars1"/>
</dbReference>
<dbReference type="VEuPathDB" id="HostDB:ENSMUSG00000018848"/>
<dbReference type="eggNOG" id="KOG4426">
    <property type="taxonomic scope" value="Eukaryota"/>
</dbReference>
<dbReference type="GeneTree" id="ENSGT00530000063407"/>
<dbReference type="HOGENOM" id="CLU_006406_5_1_1"/>
<dbReference type="InParanoid" id="Q9D0I9"/>
<dbReference type="OMA" id="NKPLHLG"/>
<dbReference type="OrthoDB" id="68056at2759"/>
<dbReference type="PhylomeDB" id="Q9D0I9"/>
<dbReference type="TreeFam" id="TF106111"/>
<dbReference type="Reactome" id="R-MMU-9856649">
    <property type="pathway name" value="Transcriptional and post-translational regulation of MITF-M expression and activity"/>
</dbReference>
<dbReference type="BioGRID-ORCS" id="104458">
    <property type="hits" value="23 hits in 80 CRISPR screens"/>
</dbReference>
<dbReference type="CD-CODE" id="CE726F99">
    <property type="entry name" value="Postsynaptic density"/>
</dbReference>
<dbReference type="PRO" id="PR:Q9D0I9"/>
<dbReference type="Proteomes" id="UP000000589">
    <property type="component" value="Chromosome 11"/>
</dbReference>
<dbReference type="RNAct" id="Q9D0I9">
    <property type="molecule type" value="protein"/>
</dbReference>
<dbReference type="Bgee" id="ENSMUSG00000018848">
    <property type="expression patterns" value="Expressed in embryonic post-anal tail and 278 other cell types or tissues"/>
</dbReference>
<dbReference type="GO" id="GO:0017101">
    <property type="term" value="C:aminoacyl-tRNA synthetase multienzyme complex"/>
    <property type="evidence" value="ECO:0000314"/>
    <property type="project" value="CAFA"/>
</dbReference>
<dbReference type="GO" id="GO:0005829">
    <property type="term" value="C:cytosol"/>
    <property type="evidence" value="ECO:0000250"/>
    <property type="project" value="UniProtKB"/>
</dbReference>
<dbReference type="GO" id="GO:0005739">
    <property type="term" value="C:mitochondrion"/>
    <property type="evidence" value="ECO:0007005"/>
    <property type="project" value="MGI"/>
</dbReference>
<dbReference type="GO" id="GO:0005730">
    <property type="term" value="C:nucleolus"/>
    <property type="evidence" value="ECO:0007669"/>
    <property type="project" value="Ensembl"/>
</dbReference>
<dbReference type="GO" id="GO:0005654">
    <property type="term" value="C:nucleoplasm"/>
    <property type="evidence" value="ECO:0007669"/>
    <property type="project" value="Ensembl"/>
</dbReference>
<dbReference type="GO" id="GO:0034618">
    <property type="term" value="F:arginine binding"/>
    <property type="evidence" value="ECO:0007669"/>
    <property type="project" value="Ensembl"/>
</dbReference>
<dbReference type="GO" id="GO:0004814">
    <property type="term" value="F:arginine-tRNA ligase activity"/>
    <property type="evidence" value="ECO:0000315"/>
    <property type="project" value="CAFA"/>
</dbReference>
<dbReference type="GO" id="GO:0005524">
    <property type="term" value="F:ATP binding"/>
    <property type="evidence" value="ECO:0007669"/>
    <property type="project" value="UniProtKB-KW"/>
</dbReference>
<dbReference type="GO" id="GO:0000049">
    <property type="term" value="F:tRNA binding"/>
    <property type="evidence" value="ECO:0007669"/>
    <property type="project" value="Ensembl"/>
</dbReference>
<dbReference type="GO" id="GO:0006420">
    <property type="term" value="P:arginyl-tRNA aminoacylation"/>
    <property type="evidence" value="ECO:0000314"/>
    <property type="project" value="CAFA"/>
</dbReference>
<dbReference type="CDD" id="cd00671">
    <property type="entry name" value="ArgRS_core"/>
    <property type="match status" value="1"/>
</dbReference>
<dbReference type="FunFam" id="1.10.730.10:FF:000016">
    <property type="entry name" value="Arginine--tRNA ligase, cytoplasmic"/>
    <property type="match status" value="1"/>
</dbReference>
<dbReference type="FunFam" id="3.30.1360.70:FF:000002">
    <property type="entry name" value="arginine--tRNA ligase, cytoplasmic"/>
    <property type="match status" value="1"/>
</dbReference>
<dbReference type="FunFam" id="3.40.50.620:FF:000084">
    <property type="entry name" value="arginine--tRNA ligase, cytoplasmic"/>
    <property type="match status" value="1"/>
</dbReference>
<dbReference type="Gene3D" id="3.30.1360.70">
    <property type="entry name" value="Arginyl tRNA synthetase N-terminal domain"/>
    <property type="match status" value="1"/>
</dbReference>
<dbReference type="Gene3D" id="3.40.50.620">
    <property type="entry name" value="HUPs"/>
    <property type="match status" value="1"/>
</dbReference>
<dbReference type="Gene3D" id="1.10.730.10">
    <property type="entry name" value="Isoleucyl-tRNA Synthetase, Domain 1"/>
    <property type="match status" value="1"/>
</dbReference>
<dbReference type="HAMAP" id="MF_00123">
    <property type="entry name" value="Arg_tRNA_synth"/>
    <property type="match status" value="1"/>
</dbReference>
<dbReference type="InterPro" id="IPR001412">
    <property type="entry name" value="aa-tRNA-synth_I_CS"/>
</dbReference>
<dbReference type="InterPro" id="IPR001278">
    <property type="entry name" value="Arg-tRNA-ligase"/>
</dbReference>
<dbReference type="InterPro" id="IPR005148">
    <property type="entry name" value="Arg-tRNA-synth_N"/>
</dbReference>
<dbReference type="InterPro" id="IPR036695">
    <property type="entry name" value="Arg-tRNA-synth_N_sf"/>
</dbReference>
<dbReference type="InterPro" id="IPR035684">
    <property type="entry name" value="ArgRS_core"/>
</dbReference>
<dbReference type="InterPro" id="IPR008909">
    <property type="entry name" value="DALR_anticod-bd"/>
</dbReference>
<dbReference type="InterPro" id="IPR014729">
    <property type="entry name" value="Rossmann-like_a/b/a_fold"/>
</dbReference>
<dbReference type="InterPro" id="IPR009080">
    <property type="entry name" value="tRNAsynth_Ia_anticodon-bd"/>
</dbReference>
<dbReference type="NCBIfam" id="TIGR00456">
    <property type="entry name" value="argS"/>
    <property type="match status" value="1"/>
</dbReference>
<dbReference type="PANTHER" id="PTHR11956:SF5">
    <property type="entry name" value="ARGININE--TRNA LIGASE, CYTOPLASMIC"/>
    <property type="match status" value="1"/>
</dbReference>
<dbReference type="PANTHER" id="PTHR11956">
    <property type="entry name" value="ARGINYL-TRNA SYNTHETASE"/>
    <property type="match status" value="1"/>
</dbReference>
<dbReference type="Pfam" id="PF03485">
    <property type="entry name" value="Arg_tRNA_synt_N"/>
    <property type="match status" value="1"/>
</dbReference>
<dbReference type="Pfam" id="PF05746">
    <property type="entry name" value="DALR_1"/>
    <property type="match status" value="1"/>
</dbReference>
<dbReference type="Pfam" id="PF00750">
    <property type="entry name" value="tRNA-synt_1d"/>
    <property type="match status" value="1"/>
</dbReference>
<dbReference type="PRINTS" id="PR01038">
    <property type="entry name" value="TRNASYNTHARG"/>
</dbReference>
<dbReference type="SMART" id="SM01016">
    <property type="entry name" value="Arg_tRNA_synt_N"/>
    <property type="match status" value="1"/>
</dbReference>
<dbReference type="SMART" id="SM00836">
    <property type="entry name" value="DALR_1"/>
    <property type="match status" value="1"/>
</dbReference>
<dbReference type="SUPFAM" id="SSF47323">
    <property type="entry name" value="Anticodon-binding domain of a subclass of class I aminoacyl-tRNA synthetases"/>
    <property type="match status" value="1"/>
</dbReference>
<dbReference type="SUPFAM" id="SSF55190">
    <property type="entry name" value="Arginyl-tRNA synthetase (ArgRS), N-terminal 'additional' domain"/>
    <property type="match status" value="1"/>
</dbReference>
<dbReference type="SUPFAM" id="SSF52374">
    <property type="entry name" value="Nucleotidylyl transferase"/>
    <property type="match status" value="1"/>
</dbReference>
<dbReference type="PROSITE" id="PS00178">
    <property type="entry name" value="AA_TRNA_LIGASE_I"/>
    <property type="match status" value="1"/>
</dbReference>
<organism>
    <name type="scientific">Mus musculus</name>
    <name type="common">Mouse</name>
    <dbReference type="NCBI Taxonomy" id="10090"/>
    <lineage>
        <taxon>Eukaryota</taxon>
        <taxon>Metazoa</taxon>
        <taxon>Chordata</taxon>
        <taxon>Craniata</taxon>
        <taxon>Vertebrata</taxon>
        <taxon>Euteleostomi</taxon>
        <taxon>Mammalia</taxon>
        <taxon>Eutheria</taxon>
        <taxon>Euarchontoglires</taxon>
        <taxon>Glires</taxon>
        <taxon>Rodentia</taxon>
        <taxon>Myomorpha</taxon>
        <taxon>Muroidea</taxon>
        <taxon>Muridae</taxon>
        <taxon>Murinae</taxon>
        <taxon>Mus</taxon>
        <taxon>Mus</taxon>
    </lineage>
</organism>
<proteinExistence type="evidence at protein level"/>
<name>SYRC_MOUSE</name>
<evidence type="ECO:0000250" key="1">
    <source>
        <dbReference type="UniProtKB" id="P54136"/>
    </source>
</evidence>
<evidence type="ECO:0000250" key="2">
    <source>
        <dbReference type="UniProtKB" id="Q05506"/>
    </source>
</evidence>
<evidence type="ECO:0000269" key="3">
    <source>
    </source>
</evidence>
<evidence type="ECO:0000305" key="4"/>
<protein>
    <recommendedName>
        <fullName>Arginine--tRNA ligase, cytoplasmic</fullName>
        <ecNumber evidence="3">6.1.1.19</ecNumber>
    </recommendedName>
    <alternativeName>
        <fullName>Arginyl-tRNA synthetase</fullName>
        <shortName>ArgRS</shortName>
    </alternativeName>
</protein>
<comment type="function">
    <text evidence="1 3">Forms part of a macromolecular complex that catalyzes the attachment of specific amino acids to cognate tRNAs during protein synthesis (PubMed:12060739). Modulates the secretion of AIMP1 and may be involved in generation of the inflammatory cytokine EMAP2 from AIMP1.</text>
</comment>
<comment type="catalytic activity">
    <reaction evidence="3">
        <text>tRNA(Arg) + L-arginine + ATP = L-arginyl-tRNA(Arg) + AMP + diphosphate</text>
        <dbReference type="Rhea" id="RHEA:20301"/>
        <dbReference type="Rhea" id="RHEA-COMP:9658"/>
        <dbReference type="Rhea" id="RHEA-COMP:9673"/>
        <dbReference type="ChEBI" id="CHEBI:30616"/>
        <dbReference type="ChEBI" id="CHEBI:32682"/>
        <dbReference type="ChEBI" id="CHEBI:33019"/>
        <dbReference type="ChEBI" id="CHEBI:78442"/>
        <dbReference type="ChEBI" id="CHEBI:78513"/>
        <dbReference type="ChEBI" id="CHEBI:456215"/>
        <dbReference type="EC" id="6.1.1.19"/>
    </reaction>
</comment>
<comment type="subunit">
    <text evidence="1 3">Interacts (via N-terminus) with AIMP1 (via N-terminus); this stimulates its catalytic activity. Interacts (via N-terminus) with LARS2 (via C-terminus). Monomer (By similarity). Part of a multisubunit complex that groups tRNA ligases for Arg (RARS1), Asp (DARS1), Gln (QARS1), Ile (IARS1), Leu (LARS1), Lys (KARS1), Met (MARS1) the bifunctional ligase for Glu and Pro (EPRS1) and the auxiliary subunits AIMP1/p43, AIMP2/p38 and EEF1E1/p18 (PubMed:12060739). Interacts with QARS1. Part of a complex composed of RARS1, QARS1 and AIMP1 (By similarity).</text>
</comment>
<comment type="subcellular location">
    <subcellularLocation>
        <location evidence="1">Cytoplasm</location>
    </subcellularLocation>
    <subcellularLocation>
        <location evidence="1">Cytoplasm</location>
        <location evidence="1">Cytosol</location>
    </subcellularLocation>
</comment>
<comment type="domain">
    <text evidence="1">The alpha-helical N-terminus (residues 1-72) mediates interaction with AIMP1 and thereby contributes to the assembly of the multisynthetase complex.</text>
</comment>
<comment type="similarity">
    <text evidence="4">Belongs to the class-I aminoacyl-tRNA synthetase family.</text>
</comment>
<keyword id="KW-0007">Acetylation</keyword>
<keyword id="KW-0030">Aminoacyl-tRNA synthetase</keyword>
<keyword id="KW-0067">ATP-binding</keyword>
<keyword id="KW-0963">Cytoplasm</keyword>
<keyword id="KW-0436">Ligase</keyword>
<keyword id="KW-0547">Nucleotide-binding</keyword>
<keyword id="KW-0648">Protein biosynthesis</keyword>
<keyword id="KW-1185">Reference proteome</keyword>
<feature type="chain" id="PRO_0000151659" description="Arginine--tRNA ligase, cytoplasmic">
    <location>
        <begin position="1"/>
        <end position="660"/>
    </location>
</feature>
<feature type="region of interest" description="Could be involved in the assembly of the multisynthetase complex">
    <location>
        <begin position="1"/>
        <end position="72"/>
    </location>
</feature>
<feature type="region of interest" description="Interaction with tRNA" evidence="2">
    <location>
        <begin position="529"/>
        <end position="543"/>
    </location>
</feature>
<feature type="short sequence motif" description="'HIGH' region">
    <location>
        <begin position="201"/>
        <end position="212"/>
    </location>
</feature>
<feature type="binding site" evidence="1">
    <location>
        <begin position="200"/>
        <end position="202"/>
    </location>
    <ligand>
        <name>L-arginine</name>
        <dbReference type="ChEBI" id="CHEBI:32682"/>
    </ligand>
</feature>
<feature type="binding site" evidence="1">
    <location>
        <position position="211"/>
    </location>
    <ligand>
        <name>L-arginine</name>
        <dbReference type="ChEBI" id="CHEBI:32682"/>
    </ligand>
</feature>
<feature type="binding site" evidence="1">
    <location>
        <position position="384"/>
    </location>
    <ligand>
        <name>L-arginine</name>
        <dbReference type="ChEBI" id="CHEBI:32682"/>
    </ligand>
</feature>
<feature type="binding site" evidence="1">
    <location>
        <position position="388"/>
    </location>
    <ligand>
        <name>L-arginine</name>
        <dbReference type="ChEBI" id="CHEBI:32682"/>
    </ligand>
</feature>
<feature type="binding site" evidence="1">
    <location>
        <position position="412"/>
    </location>
    <ligand>
        <name>L-arginine</name>
        <dbReference type="ChEBI" id="CHEBI:32682"/>
    </ligand>
</feature>
<feature type="modified residue" description="N-acetylmethionine" evidence="1">
    <location>
        <position position="1"/>
    </location>
</feature>
<feature type="sequence conflict" description="In Ref. 1; BAE30955." evidence="4" ref="1">
    <original>V</original>
    <variation>M</variation>
    <location>
        <position position="5"/>
    </location>
</feature>
<feature type="sequence conflict" description="In Ref. 1; BAB27583." evidence="4" ref="1">
    <original>L</original>
    <variation>H</variation>
    <location>
        <position position="178"/>
    </location>
</feature>
<feature type="sequence conflict" description="In Ref. 1; BAE40154." evidence="4" ref="1">
    <original>Q</original>
    <variation>E</variation>
    <location>
        <position position="184"/>
    </location>
</feature>
<feature type="sequence conflict" description="In Ref. 1; BAB27583." evidence="4" ref="1">
    <original>G</original>
    <variation>V</variation>
    <location>
        <position position="210"/>
    </location>
</feature>
<feature type="sequence conflict" description="In Ref. 1; BAE38569." evidence="4" ref="1">
    <original>L</original>
    <variation>M</variation>
    <location>
        <position position="252"/>
    </location>
</feature>
<feature type="sequence conflict" description="In Ref. 1; BAE40154." evidence="4" ref="1">
    <original>D</original>
    <variation>G</variation>
    <location>
        <position position="281"/>
    </location>
</feature>
<feature type="sequence conflict" description="In Ref. 1; BAE40154." evidence="4" ref="1">
    <original>K</original>
    <variation>E</variation>
    <location>
        <position position="288"/>
    </location>
</feature>
<feature type="sequence conflict" description="In Ref. 1; BAE40154." evidence="4" ref="1">
    <original>T</original>
    <variation>I</variation>
    <location>
        <position position="418"/>
    </location>
</feature>
<feature type="sequence conflict" description="In Ref. 1; BAB27583." evidence="4" ref="1">
    <original>M</original>
    <variation>L</variation>
    <location>
        <position position="474"/>
    </location>
</feature>
<feature type="sequence conflict" description="In Ref. 1; BAE38569." evidence="4" ref="1">
    <original>D</original>
    <variation>N</variation>
    <location>
        <position position="591"/>
    </location>
</feature>
<sequence length="660" mass="75674">MDGLVAQCSARLLQQEREIKALTAEIDRLKNCGCLEASPSLEQLREENLKLKYRLNILRRSLQEERRKPTKNMININSRLQEVFGCAIRAAYPDLENPPLIVTPSQQPKFGDYQCNSAMGISQMLKAKEQKVSPREIAENITKHLPNNKYIDKVEIAGPGFINVHLRKDFVSEQLTSLLVNGVQLPVLGDKEKVIVDFSSPNIAKEMHVGHLRSTIIGESMSRLFEFAGYDVLRLNHVGDWGTQFGMLIAHLQDKFPDYLTVSPPIGDLQAFYKESKKRFDADEEFKKRAYQCVVLLQSKNPDIMKAWNLICDVSREEFKKIYDALDITLIERGESFYQDRMKDIVKEFEDKGFVQVDDGRKIVFVPGCSVPLTIVKSDGGYTYDTSDLAAIKQRLFEEKANKIIYVVDNGQAIHFQTIFAAAQMIGWYDPKVTLVTHVGFGVVLGEDKKKFKTRSGETVRLMDLLEEGLKRSMDKLKEKERDKVLTEEELKAAQTSVAYGCIKYADLSHNRLNDYIFSFDKMLDDRGNTAAYLLYAFTRIRSIARLANIDEAMLQRAARETKIILDHEKEWKLGRCILRFPEILQKILDDLFLHTLCDYIYELATTFTEFYDSCYCVEKDRQTGKVLKVNMWRMLLCEAVAAVMAKGFDILGIKPVQRM</sequence>